<feature type="chain" id="PRO_0000173213" description="Large ribosomal subunit protein bL31B">
    <location>
        <begin position="1"/>
        <end position="87"/>
    </location>
</feature>
<evidence type="ECO:0000255" key="1">
    <source>
        <dbReference type="HAMAP-Rule" id="MF_00502"/>
    </source>
</evidence>
<evidence type="ECO:0000305" key="2"/>
<keyword id="KW-1185">Reference proteome</keyword>
<keyword id="KW-0687">Ribonucleoprotein</keyword>
<keyword id="KW-0689">Ribosomal protein</keyword>
<protein>
    <recommendedName>
        <fullName evidence="1">Large ribosomal subunit protein bL31B</fullName>
    </recommendedName>
    <alternativeName>
        <fullName evidence="2">50S ribosomal protein L31 type B</fullName>
    </alternativeName>
</protein>
<gene>
    <name evidence="1" type="primary">rpmE2</name>
    <name type="ordered locus">BPSL1491</name>
</gene>
<reference key="1">
    <citation type="journal article" date="2004" name="Proc. Natl. Acad. Sci. U.S.A.">
        <title>Genomic plasticity of the causative agent of melioidosis, Burkholderia pseudomallei.</title>
        <authorList>
            <person name="Holden M.T.G."/>
            <person name="Titball R.W."/>
            <person name="Peacock S.J."/>
            <person name="Cerdeno-Tarraga A.-M."/>
            <person name="Atkins T."/>
            <person name="Crossman L.C."/>
            <person name="Pitt T."/>
            <person name="Churcher C."/>
            <person name="Mungall K.L."/>
            <person name="Bentley S.D."/>
            <person name="Sebaihia M."/>
            <person name="Thomson N.R."/>
            <person name="Bason N."/>
            <person name="Beacham I.R."/>
            <person name="Brooks K."/>
            <person name="Brown K.A."/>
            <person name="Brown N.F."/>
            <person name="Challis G.L."/>
            <person name="Cherevach I."/>
            <person name="Chillingworth T."/>
            <person name="Cronin A."/>
            <person name="Crossett B."/>
            <person name="Davis P."/>
            <person name="DeShazer D."/>
            <person name="Feltwell T."/>
            <person name="Fraser A."/>
            <person name="Hance Z."/>
            <person name="Hauser H."/>
            <person name="Holroyd S."/>
            <person name="Jagels K."/>
            <person name="Keith K.E."/>
            <person name="Maddison M."/>
            <person name="Moule S."/>
            <person name="Price C."/>
            <person name="Quail M.A."/>
            <person name="Rabbinowitsch E."/>
            <person name="Rutherford K."/>
            <person name="Sanders M."/>
            <person name="Simmonds M."/>
            <person name="Songsivilai S."/>
            <person name="Stevens K."/>
            <person name="Tumapa S."/>
            <person name="Vesaratchavest M."/>
            <person name="Whitehead S."/>
            <person name="Yeats C."/>
            <person name="Barrell B.G."/>
            <person name="Oyston P.C.F."/>
            <person name="Parkhill J."/>
        </authorList>
    </citation>
    <scope>NUCLEOTIDE SEQUENCE [LARGE SCALE GENOMIC DNA]</scope>
    <source>
        <strain>K96243</strain>
    </source>
</reference>
<name>RL31B_BURPS</name>
<organism>
    <name type="scientific">Burkholderia pseudomallei (strain K96243)</name>
    <dbReference type="NCBI Taxonomy" id="272560"/>
    <lineage>
        <taxon>Bacteria</taxon>
        <taxon>Pseudomonadati</taxon>
        <taxon>Pseudomonadota</taxon>
        <taxon>Betaproteobacteria</taxon>
        <taxon>Burkholderiales</taxon>
        <taxon>Burkholderiaceae</taxon>
        <taxon>Burkholderia</taxon>
        <taxon>pseudomallei group</taxon>
    </lineage>
</organism>
<sequence length="87" mass="9912">MKQGIHPDYREVVFQDMSNGFKFITRSTIQTRETIEFEGKTYPLAKIEVSSESHSFYTGQQKIMDTAGRVEKFKNKFGARASGKAAK</sequence>
<dbReference type="EMBL" id="BX571965">
    <property type="protein sequence ID" value="CAH35492.1"/>
    <property type="molecule type" value="Genomic_DNA"/>
</dbReference>
<dbReference type="RefSeq" id="WP_004193070.1">
    <property type="nucleotide sequence ID" value="NZ_CP009538.1"/>
</dbReference>
<dbReference type="RefSeq" id="YP_108111.1">
    <property type="nucleotide sequence ID" value="NC_006350.1"/>
</dbReference>
<dbReference type="SMR" id="Q63UV5"/>
<dbReference type="STRING" id="272560.BPSL1491"/>
<dbReference type="KEGG" id="bps:BPSL1491"/>
<dbReference type="PATRIC" id="fig|272560.51.peg.3526"/>
<dbReference type="eggNOG" id="COG0254">
    <property type="taxonomic scope" value="Bacteria"/>
</dbReference>
<dbReference type="Proteomes" id="UP000000605">
    <property type="component" value="Chromosome 1"/>
</dbReference>
<dbReference type="GO" id="GO:1990904">
    <property type="term" value="C:ribonucleoprotein complex"/>
    <property type="evidence" value="ECO:0007669"/>
    <property type="project" value="UniProtKB-KW"/>
</dbReference>
<dbReference type="GO" id="GO:0005840">
    <property type="term" value="C:ribosome"/>
    <property type="evidence" value="ECO:0007669"/>
    <property type="project" value="UniProtKB-KW"/>
</dbReference>
<dbReference type="GO" id="GO:0003735">
    <property type="term" value="F:structural constituent of ribosome"/>
    <property type="evidence" value="ECO:0007669"/>
    <property type="project" value="InterPro"/>
</dbReference>
<dbReference type="GO" id="GO:0006412">
    <property type="term" value="P:translation"/>
    <property type="evidence" value="ECO:0007669"/>
    <property type="project" value="UniProtKB-UniRule"/>
</dbReference>
<dbReference type="Gene3D" id="4.10.830.30">
    <property type="entry name" value="Ribosomal protein L31"/>
    <property type="match status" value="1"/>
</dbReference>
<dbReference type="HAMAP" id="MF_00502">
    <property type="entry name" value="Ribosomal_bL31_2"/>
    <property type="match status" value="1"/>
</dbReference>
<dbReference type="InterPro" id="IPR034704">
    <property type="entry name" value="Ribosomal_bL28/bL31-like_sf"/>
</dbReference>
<dbReference type="InterPro" id="IPR002150">
    <property type="entry name" value="Ribosomal_bL31"/>
</dbReference>
<dbReference type="InterPro" id="IPR027493">
    <property type="entry name" value="Ribosomal_bL31_B"/>
</dbReference>
<dbReference type="InterPro" id="IPR042105">
    <property type="entry name" value="Ribosomal_bL31_sf"/>
</dbReference>
<dbReference type="NCBIfam" id="TIGR00105">
    <property type="entry name" value="L31"/>
    <property type="match status" value="1"/>
</dbReference>
<dbReference type="NCBIfam" id="NF002462">
    <property type="entry name" value="PRK01678.1"/>
    <property type="match status" value="1"/>
</dbReference>
<dbReference type="PANTHER" id="PTHR33280">
    <property type="entry name" value="50S RIBOSOMAL PROTEIN L31, CHLOROPLASTIC"/>
    <property type="match status" value="1"/>
</dbReference>
<dbReference type="PANTHER" id="PTHR33280:SF1">
    <property type="entry name" value="LARGE RIBOSOMAL SUBUNIT PROTEIN BL31C"/>
    <property type="match status" value="1"/>
</dbReference>
<dbReference type="Pfam" id="PF01197">
    <property type="entry name" value="Ribosomal_L31"/>
    <property type="match status" value="1"/>
</dbReference>
<dbReference type="PRINTS" id="PR01249">
    <property type="entry name" value="RIBOSOMALL31"/>
</dbReference>
<dbReference type="SUPFAM" id="SSF143800">
    <property type="entry name" value="L28p-like"/>
    <property type="match status" value="1"/>
</dbReference>
<comment type="subunit">
    <text evidence="1">Part of the 50S ribosomal subunit.</text>
</comment>
<comment type="similarity">
    <text evidence="1">Belongs to the bacterial ribosomal protein bL31 family. Type B subfamily.</text>
</comment>
<accession>Q63UV5</accession>
<proteinExistence type="inferred from homology"/>